<comment type="function">
    <text evidence="1">Catalyzes the decarboxylation of S-adenosylmethionine to S-adenosylmethioninamine (dcAdoMet), the propylamine donor required for the synthesis of the polyamines spermine and spermidine from the diamine putrescine.</text>
</comment>
<comment type="catalytic activity">
    <reaction evidence="1">
        <text>S-adenosyl-L-methionine + H(+) = S-adenosyl 3-(methylsulfanyl)propylamine + CO2</text>
        <dbReference type="Rhea" id="RHEA:15981"/>
        <dbReference type="ChEBI" id="CHEBI:15378"/>
        <dbReference type="ChEBI" id="CHEBI:16526"/>
        <dbReference type="ChEBI" id="CHEBI:57443"/>
        <dbReference type="ChEBI" id="CHEBI:59789"/>
        <dbReference type="EC" id="4.1.1.50"/>
    </reaction>
</comment>
<comment type="cofactor">
    <cofactor evidence="1">
        <name>pyruvate</name>
        <dbReference type="ChEBI" id="CHEBI:15361"/>
    </cofactor>
    <text evidence="1">Binds 1 pyruvoyl group covalently per subunit.</text>
</comment>
<comment type="pathway">
    <text evidence="1">Amine and polyamine biosynthesis; S-adenosylmethioninamine biosynthesis; S-adenosylmethioninamine from S-adenosyl-L-methionine: step 1/1.</text>
</comment>
<comment type="subunit">
    <text evidence="1">Heterooctamer of four alpha and four beta chains arranged as a tetramer of alpha/beta heterodimers.</text>
</comment>
<comment type="PTM">
    <text evidence="1">Is synthesized initially as an inactive proenzyme. Formation of the active enzyme involves a self-maturation process in which the active site pyruvoyl group is generated from an internal serine residue via an autocatalytic post-translational modification. Two non-identical subunits are generated from the proenzyme in this reaction, and the pyruvate is formed at the N-terminus of the alpha chain, which is derived from the carboxyl end of the proenzyme. The post-translation cleavage follows an unusual pathway, termed non-hydrolytic serinolysis, in which the side chain hydroxyl group of the serine supplies its oxygen atom to form the C-terminus of the beta chain, while the remainder of the serine residue undergoes an oxidative deamination to produce ammonia and the pyruvoyl group blocking the N-terminus of the alpha chain.</text>
</comment>
<comment type="similarity">
    <text evidence="1">Belongs to the prokaryotic AdoMetDC family. Type 2 subfamily.</text>
</comment>
<dbReference type="EC" id="4.1.1.50" evidence="1"/>
<dbReference type="EMBL" id="CP000724">
    <property type="protein sequence ID" value="ABR48971.1"/>
    <property type="molecule type" value="Genomic_DNA"/>
</dbReference>
<dbReference type="RefSeq" id="WP_012063942.1">
    <property type="nucleotide sequence ID" value="NC_009633.1"/>
</dbReference>
<dbReference type="SMR" id="A6TS03"/>
<dbReference type="STRING" id="293826.Amet_2821"/>
<dbReference type="KEGG" id="amt:Amet_2821"/>
<dbReference type="eggNOG" id="COG1586">
    <property type="taxonomic scope" value="Bacteria"/>
</dbReference>
<dbReference type="HOGENOM" id="CLU_092007_0_0_9"/>
<dbReference type="OrthoDB" id="5290709at2"/>
<dbReference type="UniPathway" id="UPA00331">
    <property type="reaction ID" value="UER00451"/>
</dbReference>
<dbReference type="Proteomes" id="UP000001572">
    <property type="component" value="Chromosome"/>
</dbReference>
<dbReference type="GO" id="GO:0005829">
    <property type="term" value="C:cytosol"/>
    <property type="evidence" value="ECO:0007669"/>
    <property type="project" value="TreeGrafter"/>
</dbReference>
<dbReference type="GO" id="GO:0004014">
    <property type="term" value="F:adenosylmethionine decarboxylase activity"/>
    <property type="evidence" value="ECO:0007669"/>
    <property type="project" value="UniProtKB-UniRule"/>
</dbReference>
<dbReference type="GO" id="GO:0008295">
    <property type="term" value="P:spermidine biosynthetic process"/>
    <property type="evidence" value="ECO:0007669"/>
    <property type="project" value="UniProtKB-UniRule"/>
</dbReference>
<dbReference type="Gene3D" id="3.60.90.10">
    <property type="entry name" value="S-adenosylmethionine decarboxylase"/>
    <property type="match status" value="1"/>
</dbReference>
<dbReference type="HAMAP" id="MF_00465">
    <property type="entry name" value="AdoMetDC_2"/>
    <property type="match status" value="1"/>
</dbReference>
<dbReference type="InterPro" id="IPR003826">
    <property type="entry name" value="AdoMetDC_fam_prok"/>
</dbReference>
<dbReference type="InterPro" id="IPR009165">
    <property type="entry name" value="S-AdoMet_deCO2ase_bac"/>
</dbReference>
<dbReference type="InterPro" id="IPR016067">
    <property type="entry name" value="S-AdoMet_deCO2ase_core"/>
</dbReference>
<dbReference type="NCBIfam" id="TIGR03331">
    <property type="entry name" value="SAM_DCase_Eco"/>
    <property type="match status" value="1"/>
</dbReference>
<dbReference type="PANTHER" id="PTHR33866">
    <property type="entry name" value="S-ADENOSYLMETHIONINE DECARBOXYLASE PROENZYME"/>
    <property type="match status" value="1"/>
</dbReference>
<dbReference type="PANTHER" id="PTHR33866:SF1">
    <property type="entry name" value="S-ADENOSYLMETHIONINE DECARBOXYLASE PROENZYME"/>
    <property type="match status" value="1"/>
</dbReference>
<dbReference type="Pfam" id="PF02675">
    <property type="entry name" value="AdoMet_dc"/>
    <property type="match status" value="1"/>
</dbReference>
<dbReference type="PIRSF" id="PIRSF001356">
    <property type="entry name" value="SAM_decarboxylas"/>
    <property type="match status" value="1"/>
</dbReference>
<dbReference type="SUPFAM" id="SSF56276">
    <property type="entry name" value="S-adenosylmethionine decarboxylase"/>
    <property type="match status" value="1"/>
</dbReference>
<organism>
    <name type="scientific">Alkaliphilus metalliredigens (strain QYMF)</name>
    <dbReference type="NCBI Taxonomy" id="293826"/>
    <lineage>
        <taxon>Bacteria</taxon>
        <taxon>Bacillati</taxon>
        <taxon>Bacillota</taxon>
        <taxon>Clostridia</taxon>
        <taxon>Peptostreptococcales</taxon>
        <taxon>Natronincolaceae</taxon>
        <taxon>Alkaliphilus</taxon>
    </lineage>
</organism>
<sequence>MDIKSFEKIQLYGFNNLTKTLSFNIYDICYAKAPEQSKAYIAYIDEQYNAERLTKILSNVADITGANILSISKQDYDPQGASVTMLVAEEMTVPTLTPESLTGESPGPLPGNKPSPGSIVTHLDKSHVTVHTYPETHPLDGISTFRADIDVSTCGHISPIKALNYLIHSFESDIVTIDYRVRGFTRDINGQKYFIDHDINSIQNYIAKDILNLYHAIDVNVYQENIFHTKMTLKDFKLNNYLFGVSEEELSDHESASIKDQLRDEMQEIFYGRNVTKV</sequence>
<protein>
    <recommendedName>
        <fullName evidence="1">S-adenosylmethionine decarboxylase proenzyme</fullName>
        <shortName evidence="1">AdoMetDC</shortName>
        <shortName evidence="1">SAMDC</shortName>
        <ecNumber evidence="1">4.1.1.50</ecNumber>
    </recommendedName>
    <component>
        <recommendedName>
            <fullName evidence="1">S-adenosylmethionine decarboxylase beta chain</fullName>
        </recommendedName>
    </component>
    <component>
        <recommendedName>
            <fullName evidence="1">S-adenosylmethionine decarboxylase alpha chain</fullName>
        </recommendedName>
    </component>
</protein>
<name>SPED_ALKMQ</name>
<feature type="chain" id="PRO_0000364355" description="S-adenosylmethionine decarboxylase beta chain" evidence="1">
    <location>
        <begin position="1"/>
        <end position="125"/>
    </location>
</feature>
<feature type="chain" id="PRO_0000364356" description="S-adenosylmethionine decarboxylase alpha chain" evidence="1">
    <location>
        <begin position="126"/>
        <end position="278"/>
    </location>
</feature>
<feature type="region of interest" description="Disordered" evidence="2">
    <location>
        <begin position="96"/>
        <end position="115"/>
    </location>
</feature>
<feature type="active site" description="Schiff-base intermediate with substrate; via pyruvic acid" evidence="1">
    <location>
        <position position="126"/>
    </location>
</feature>
<feature type="active site" description="Proton acceptor; for processing activity" evidence="1">
    <location>
        <position position="131"/>
    </location>
</feature>
<feature type="active site" description="Proton donor; for catalytic activity" evidence="1">
    <location>
        <position position="154"/>
    </location>
</feature>
<feature type="site" description="Cleavage (non-hydrolytic); by autolysis" evidence="1">
    <location>
        <begin position="125"/>
        <end position="126"/>
    </location>
</feature>
<feature type="modified residue" description="Pyruvic acid (Ser); by autocatalysis" evidence="1">
    <location>
        <position position="126"/>
    </location>
</feature>
<keyword id="KW-0068">Autocatalytic cleavage</keyword>
<keyword id="KW-0210">Decarboxylase</keyword>
<keyword id="KW-0456">Lyase</keyword>
<keyword id="KW-0620">Polyamine biosynthesis</keyword>
<keyword id="KW-0670">Pyruvate</keyword>
<keyword id="KW-1185">Reference proteome</keyword>
<keyword id="KW-0949">S-adenosyl-L-methionine</keyword>
<keyword id="KW-0704">Schiff base</keyword>
<keyword id="KW-0745">Spermidine biosynthesis</keyword>
<keyword id="KW-0865">Zymogen</keyword>
<evidence type="ECO:0000255" key="1">
    <source>
        <dbReference type="HAMAP-Rule" id="MF_00465"/>
    </source>
</evidence>
<evidence type="ECO:0000256" key="2">
    <source>
        <dbReference type="SAM" id="MobiDB-lite"/>
    </source>
</evidence>
<accession>A6TS03</accession>
<reference key="1">
    <citation type="journal article" date="2016" name="Genome Announc.">
        <title>Complete genome sequence of Alkaliphilus metalliredigens strain QYMF, an alkaliphilic and metal-reducing bacterium isolated from borax-contaminated leachate ponds.</title>
        <authorList>
            <person name="Hwang C."/>
            <person name="Copeland A."/>
            <person name="Lucas S."/>
            <person name="Lapidus A."/>
            <person name="Barry K."/>
            <person name="Detter J.C."/>
            <person name="Glavina Del Rio T."/>
            <person name="Hammon N."/>
            <person name="Israni S."/>
            <person name="Dalin E."/>
            <person name="Tice H."/>
            <person name="Pitluck S."/>
            <person name="Chertkov O."/>
            <person name="Brettin T."/>
            <person name="Bruce D."/>
            <person name="Han C."/>
            <person name="Schmutz J."/>
            <person name="Larimer F."/>
            <person name="Land M.L."/>
            <person name="Hauser L."/>
            <person name="Kyrpides N."/>
            <person name="Mikhailova N."/>
            <person name="Ye Q."/>
            <person name="Zhou J."/>
            <person name="Richardson P."/>
            <person name="Fields M.W."/>
        </authorList>
    </citation>
    <scope>NUCLEOTIDE SEQUENCE [LARGE SCALE GENOMIC DNA]</scope>
    <source>
        <strain>QYMF</strain>
    </source>
</reference>
<gene>
    <name evidence="1" type="primary">speD</name>
    <name type="ordered locus">Amet_2821</name>
</gene>
<proteinExistence type="inferred from homology"/>